<feature type="chain" id="PRO_1000061230" description="Phosphoenolpyruvate carboxylase">
    <location>
        <begin position="1"/>
        <end position="883"/>
    </location>
</feature>
<feature type="active site" evidence="1">
    <location>
        <position position="138"/>
    </location>
</feature>
<feature type="active site" evidence="1">
    <location>
        <position position="546"/>
    </location>
</feature>
<evidence type="ECO:0000255" key="1">
    <source>
        <dbReference type="HAMAP-Rule" id="MF_00595"/>
    </source>
</evidence>
<dbReference type="EC" id="4.1.1.31" evidence="1"/>
<dbReference type="EMBL" id="CP000802">
    <property type="protein sequence ID" value="ABV08368.1"/>
    <property type="molecule type" value="Genomic_DNA"/>
</dbReference>
<dbReference type="RefSeq" id="WP_001005579.1">
    <property type="nucleotide sequence ID" value="NC_009800.1"/>
</dbReference>
<dbReference type="SMR" id="A8A764"/>
<dbReference type="GeneID" id="93777937"/>
<dbReference type="KEGG" id="ecx:EcHS_A4190"/>
<dbReference type="HOGENOM" id="CLU_006557_2_0_6"/>
<dbReference type="GO" id="GO:0005829">
    <property type="term" value="C:cytosol"/>
    <property type="evidence" value="ECO:0007669"/>
    <property type="project" value="TreeGrafter"/>
</dbReference>
<dbReference type="GO" id="GO:0000287">
    <property type="term" value="F:magnesium ion binding"/>
    <property type="evidence" value="ECO:0007669"/>
    <property type="project" value="UniProtKB-UniRule"/>
</dbReference>
<dbReference type="GO" id="GO:0008964">
    <property type="term" value="F:phosphoenolpyruvate carboxylase activity"/>
    <property type="evidence" value="ECO:0007669"/>
    <property type="project" value="UniProtKB-UniRule"/>
</dbReference>
<dbReference type="GO" id="GO:0015977">
    <property type="term" value="P:carbon fixation"/>
    <property type="evidence" value="ECO:0007669"/>
    <property type="project" value="UniProtKB-UniRule"/>
</dbReference>
<dbReference type="GO" id="GO:0006107">
    <property type="term" value="P:oxaloacetate metabolic process"/>
    <property type="evidence" value="ECO:0007669"/>
    <property type="project" value="UniProtKB-UniRule"/>
</dbReference>
<dbReference type="GO" id="GO:0006099">
    <property type="term" value="P:tricarboxylic acid cycle"/>
    <property type="evidence" value="ECO:0007669"/>
    <property type="project" value="InterPro"/>
</dbReference>
<dbReference type="FunFam" id="1.20.1440.90:FF:000002">
    <property type="entry name" value="Phosphoenolpyruvate carboxylase"/>
    <property type="match status" value="1"/>
</dbReference>
<dbReference type="Gene3D" id="1.20.1440.90">
    <property type="entry name" value="Phosphoenolpyruvate/pyruvate domain"/>
    <property type="match status" value="1"/>
</dbReference>
<dbReference type="HAMAP" id="MF_00595">
    <property type="entry name" value="PEPcase_type1"/>
    <property type="match status" value="1"/>
</dbReference>
<dbReference type="InterPro" id="IPR021135">
    <property type="entry name" value="PEP_COase"/>
</dbReference>
<dbReference type="InterPro" id="IPR022805">
    <property type="entry name" value="PEP_COase_bac/pln-type"/>
</dbReference>
<dbReference type="InterPro" id="IPR018129">
    <property type="entry name" value="PEP_COase_Lys_AS"/>
</dbReference>
<dbReference type="InterPro" id="IPR033129">
    <property type="entry name" value="PEPCASE_His_AS"/>
</dbReference>
<dbReference type="InterPro" id="IPR015813">
    <property type="entry name" value="Pyrv/PenolPyrv_kinase-like_dom"/>
</dbReference>
<dbReference type="NCBIfam" id="NF000584">
    <property type="entry name" value="PRK00009.1"/>
    <property type="match status" value="1"/>
</dbReference>
<dbReference type="PANTHER" id="PTHR30523">
    <property type="entry name" value="PHOSPHOENOLPYRUVATE CARBOXYLASE"/>
    <property type="match status" value="1"/>
</dbReference>
<dbReference type="PANTHER" id="PTHR30523:SF6">
    <property type="entry name" value="PHOSPHOENOLPYRUVATE CARBOXYLASE"/>
    <property type="match status" value="1"/>
</dbReference>
<dbReference type="Pfam" id="PF00311">
    <property type="entry name" value="PEPcase"/>
    <property type="match status" value="1"/>
</dbReference>
<dbReference type="PRINTS" id="PR00150">
    <property type="entry name" value="PEPCARBXLASE"/>
</dbReference>
<dbReference type="SUPFAM" id="SSF51621">
    <property type="entry name" value="Phosphoenolpyruvate/pyruvate domain"/>
    <property type="match status" value="1"/>
</dbReference>
<dbReference type="PROSITE" id="PS00781">
    <property type="entry name" value="PEPCASE_1"/>
    <property type="match status" value="1"/>
</dbReference>
<dbReference type="PROSITE" id="PS00393">
    <property type="entry name" value="PEPCASE_2"/>
    <property type="match status" value="1"/>
</dbReference>
<name>CAPP_ECOHS</name>
<keyword id="KW-0120">Carbon dioxide fixation</keyword>
<keyword id="KW-0456">Lyase</keyword>
<keyword id="KW-0460">Magnesium</keyword>
<comment type="function">
    <text evidence="1">Forms oxaloacetate, a four-carbon dicarboxylic acid source for the tricarboxylic acid cycle.</text>
</comment>
<comment type="catalytic activity">
    <reaction evidence="1">
        <text>oxaloacetate + phosphate = phosphoenolpyruvate + hydrogencarbonate</text>
        <dbReference type="Rhea" id="RHEA:28370"/>
        <dbReference type="ChEBI" id="CHEBI:16452"/>
        <dbReference type="ChEBI" id="CHEBI:17544"/>
        <dbReference type="ChEBI" id="CHEBI:43474"/>
        <dbReference type="ChEBI" id="CHEBI:58702"/>
        <dbReference type="EC" id="4.1.1.31"/>
    </reaction>
</comment>
<comment type="cofactor">
    <cofactor evidence="1">
        <name>Mg(2+)</name>
        <dbReference type="ChEBI" id="CHEBI:18420"/>
    </cofactor>
</comment>
<comment type="similarity">
    <text evidence="1">Belongs to the PEPCase type 1 family.</text>
</comment>
<gene>
    <name evidence="1" type="primary">ppc</name>
    <name type="ordered locus">EcHS_A4190</name>
</gene>
<accession>A8A764</accession>
<proteinExistence type="inferred from homology"/>
<organism>
    <name type="scientific">Escherichia coli O9:H4 (strain HS)</name>
    <dbReference type="NCBI Taxonomy" id="331112"/>
    <lineage>
        <taxon>Bacteria</taxon>
        <taxon>Pseudomonadati</taxon>
        <taxon>Pseudomonadota</taxon>
        <taxon>Gammaproteobacteria</taxon>
        <taxon>Enterobacterales</taxon>
        <taxon>Enterobacteriaceae</taxon>
        <taxon>Escherichia</taxon>
    </lineage>
</organism>
<protein>
    <recommendedName>
        <fullName evidence="1">Phosphoenolpyruvate carboxylase</fullName>
        <shortName evidence="1">PEPC</shortName>
        <shortName evidence="1">PEPCase</shortName>
        <ecNumber evidence="1">4.1.1.31</ecNumber>
    </recommendedName>
</protein>
<sequence length="883" mass="99077">MNEQYSALRSNVSMLGKVLGETIKDALGEHILERVETIRKLSKSSRAGNDANRQELLTTLQNLSNDELLPVARAFSQFLNLANTAEQYHSISPKGEAASNPEVIARTLRKLKNQPELSEDTIKKAVESLSLELVLTAHPTEITRRTLIHKMVEVNACLKQLDNKDIADYEHNQLMRRLRQLIAQSWHTDEIRKLRPSPVDEAKWGFAVVENSLWQGVPNYLRELNEQLEENLGYKLPVEFVPVRFTSWMGGDRDGNPNVTADITRHVLLLSRWKATDLFLKDIQVLVSELSMVEATPELLALVGEEGAAEPYRYLMKNLRSRLMATQAWLEARLKGEELPKPEGLLTQNEELWEPLYACYQSLQACGMGIIANGDLLDTLRRVKCFGVPLVRIDIRQESTRHTEALGELTRYLGIGDYESWSEADKQAFLIRELNSKRPLLPRNWQPSAETREVLDTCQVIAEAPQGSIAAYVISMAKTPSDVLAVHLLLKEAGIGFAMPVAPLFETLDDLNNANDVMTQLLNIDWYRGLIQGKQMVMIGYSDSAKDAGVMAASWAQYQAQDALIKTCEKAGIELTLFHGRGGSIGRGGAPAHAALLSQPPGSLKGGLRVTEQGEMIRFKYGLPEITVSSLSLYTGAILEANLLPPPEPKESWRRIMDELSVISCDLYRGYVRENKDFVPYFRSATPEQELGKLPLGSRPAKRRPTGGVESLRAIPWIFAWTQNRLMLPAWLGAGTALQKVVEDGKQSELEAMCRDWPFFSTRLGMLEMVFAKADLWLAEYYDQRLVDKALWPLGKELRNLQEEDIKVVLAIANDSHLMADLPWIAESIQLRNIYTDPLNVLQAELLHRSRQAEKEGQEPDPRVEQALMVTIAGIAAGMRNTG</sequence>
<reference key="1">
    <citation type="journal article" date="2008" name="J. Bacteriol.">
        <title>The pangenome structure of Escherichia coli: comparative genomic analysis of E. coli commensal and pathogenic isolates.</title>
        <authorList>
            <person name="Rasko D.A."/>
            <person name="Rosovitz M.J."/>
            <person name="Myers G.S.A."/>
            <person name="Mongodin E.F."/>
            <person name="Fricke W.F."/>
            <person name="Gajer P."/>
            <person name="Crabtree J."/>
            <person name="Sebaihia M."/>
            <person name="Thomson N.R."/>
            <person name="Chaudhuri R."/>
            <person name="Henderson I.R."/>
            <person name="Sperandio V."/>
            <person name="Ravel J."/>
        </authorList>
    </citation>
    <scope>NUCLEOTIDE SEQUENCE [LARGE SCALE GENOMIC DNA]</scope>
    <source>
        <strain>HS</strain>
    </source>
</reference>